<gene>
    <name type="primary">mvhG</name>
    <name type="ordered locus">Arcpr_1551</name>
</gene>
<proteinExistence type="evidence at protein level"/>
<comment type="function">
    <text evidence="2">Part of a complex that provides reducing equivalents for heterodisulfide reductase.</text>
</comment>
<comment type="subunit">
    <text evidence="2">The F420-non-reducing hydrogenase is composed of three subunits; MvhA, MvhD and MvhG. It forms a complex with the heterodisulfide reductase (Hdr).</text>
</comment>
<comment type="subcellular location">
    <subcellularLocation>
        <location evidence="2">Cytoplasm</location>
    </subcellularLocation>
</comment>
<comment type="similarity">
    <text evidence="1">Belongs to the [NiFe]/[NiFeSe] hydrogenase small subunit family.</text>
</comment>
<reference key="1">
    <citation type="journal article" date="2010" name="Stand. Genomic Sci.">
        <title>Complete genome sequence of Archaeoglobus profundus type strain (AV18).</title>
        <authorList>
            <person name="von Jan M."/>
            <person name="Lapidus A."/>
            <person name="Del Rio T.G."/>
            <person name="Copeland A."/>
            <person name="Tice H."/>
            <person name="Cheng J.F."/>
            <person name="Lucas S."/>
            <person name="Chen F."/>
            <person name="Nolan M."/>
            <person name="Goodwin L."/>
            <person name="Han C."/>
            <person name="Pitluck S."/>
            <person name="Liolios K."/>
            <person name="Ivanova N."/>
            <person name="Mavromatis K."/>
            <person name="Ovchinnikova G."/>
            <person name="Chertkov O."/>
            <person name="Pati A."/>
            <person name="Chen A."/>
            <person name="Palaniappan K."/>
            <person name="Land M."/>
            <person name="Hauser L."/>
            <person name="Chang Y.J."/>
            <person name="Jeffries C.D."/>
            <person name="Saunders E."/>
            <person name="Brettin T."/>
            <person name="Detter J.C."/>
            <person name="Chain P."/>
            <person name="Eichinger K."/>
            <person name="Huber H."/>
            <person name="Spring S."/>
            <person name="Rohde M."/>
            <person name="Goker M."/>
            <person name="Wirth R."/>
            <person name="Woyke T."/>
            <person name="Bristow J."/>
            <person name="Eisen J.A."/>
            <person name="Markowitz V."/>
            <person name="Hugenholtz P."/>
            <person name="Kyrpides N.C."/>
            <person name="Klenk H.P."/>
        </authorList>
    </citation>
    <scope>NUCLEOTIDE SEQUENCE [LARGE SCALE GENOMIC DNA]</scope>
    <source>
        <strain>DSM 5631 / JCM 9629 / NBRC 100127 / Av18</strain>
    </source>
</reference>
<reference evidence="3" key="2">
    <citation type="journal article" date="2004" name="Eur. J. Biochem.">
        <title>Two distinct heterodisulfide reductase-like enzymes in the sulfate-reducing archaeon Archaeoglobus profundus.</title>
        <authorList>
            <person name="Mander G.J."/>
            <person name="Pierik A.J."/>
            <person name="Huber H."/>
            <person name="Hedderich R."/>
        </authorList>
    </citation>
    <scope>PROTEIN SEQUENCE OF 3-18</scope>
    <scope>INTERACTION WITH HETERODISULFIDE REDUCTASE</scope>
    <scope>SUBCELLULAR LOCATION</scope>
</reference>
<name>VHCG_ARCPA</name>
<sequence>MALKLAYLLVGGCGGCDMAVVDLSEKLVDALEHLEIVFWAPTVADVKYKDLEAMPDQSIDLGLISGMVRNKENEHLVKVMRQKCKIIVAFGICAALGGIPGMANMHKNEELFENAYIKSPSTDNPNNVIPQPVSKEGEFELTLPEFLDRVKPIDEVIEVDYYVGGCPPHHDHVAKVVEAVITGNLPPKGSWITNGKAVCDVCARNPAVKGKTREFVKEVKRMHEGIPDEEECLLNQGYLCLGPVTQGDCGALCPKVNIRCAGCGGPIPPTRDFGLRAISALGSILADENVTDQLIKKYPVLTKILYRYSLPGAMINKKLFK</sequence>
<keyword id="KW-0963">Cytoplasm</keyword>
<keyword id="KW-0903">Direct protein sequencing</keyword>
<keyword id="KW-0560">Oxidoreductase</keyword>
<keyword id="KW-1185">Reference proteome</keyword>
<dbReference type="EC" id="1.12.99.-"/>
<dbReference type="EMBL" id="CP001857">
    <property type="protein sequence ID" value="ADB58597.1"/>
    <property type="molecule type" value="Genomic_DNA"/>
</dbReference>
<dbReference type="RefSeq" id="WP_012940933.1">
    <property type="nucleotide sequence ID" value="NC_013741.1"/>
</dbReference>
<dbReference type="SMR" id="P84627"/>
<dbReference type="STRING" id="572546.Arcpr_1551"/>
<dbReference type="PaxDb" id="572546-Arcpr_1551"/>
<dbReference type="GeneID" id="8740241"/>
<dbReference type="KEGG" id="apo:Arcpr_1551"/>
<dbReference type="eggNOG" id="arCOG02472">
    <property type="taxonomic scope" value="Archaea"/>
</dbReference>
<dbReference type="HOGENOM" id="CLU_053270_0_0_2"/>
<dbReference type="OrthoDB" id="37913at2157"/>
<dbReference type="Proteomes" id="UP000001901">
    <property type="component" value="Chromosome"/>
</dbReference>
<dbReference type="GO" id="GO:0005737">
    <property type="term" value="C:cytoplasm"/>
    <property type="evidence" value="ECO:0007669"/>
    <property type="project" value="UniProtKB-SubCell"/>
</dbReference>
<dbReference type="GO" id="GO:0051536">
    <property type="term" value="F:iron-sulfur cluster binding"/>
    <property type="evidence" value="ECO:0007669"/>
    <property type="project" value="InterPro"/>
</dbReference>
<dbReference type="GO" id="GO:0016491">
    <property type="term" value="F:oxidoreductase activity"/>
    <property type="evidence" value="ECO:0007669"/>
    <property type="project" value="UniProtKB-KW"/>
</dbReference>
<dbReference type="Gene3D" id="3.40.50.700">
    <property type="entry name" value="NADH:ubiquinone oxidoreductase-like, 20kDa subunit"/>
    <property type="match status" value="1"/>
</dbReference>
<dbReference type="InterPro" id="IPR051349">
    <property type="entry name" value="Hydrogenase_assoc-protein"/>
</dbReference>
<dbReference type="InterPro" id="IPR006137">
    <property type="entry name" value="NADH_UbQ_OxRdtase-like_20kDa"/>
</dbReference>
<dbReference type="InterPro" id="IPR037024">
    <property type="entry name" value="NiFe_Hase_small_N_sf"/>
</dbReference>
<dbReference type="PANTHER" id="PTHR42845">
    <property type="entry name" value="COENZYME F420-REDUCING HYDROGENASE, GAMMA SUBUNIT"/>
    <property type="match status" value="1"/>
</dbReference>
<dbReference type="PANTHER" id="PTHR42845:SF2">
    <property type="entry name" value="F420-NON-REDUCING HYDROGENASE VHU SUBUNIT G"/>
    <property type="match status" value="1"/>
</dbReference>
<dbReference type="Pfam" id="PF01058">
    <property type="entry name" value="Oxidored_q6"/>
    <property type="match status" value="1"/>
</dbReference>
<dbReference type="SUPFAM" id="SSF56770">
    <property type="entry name" value="HydA/Nqo6-like"/>
    <property type="match status" value="1"/>
</dbReference>
<accession>P84627</accession>
<accession>D2REQ3</accession>
<organism>
    <name type="scientific">Archaeoglobus profundus (strain DSM 5631 / JCM 9629 / NBRC 100127 / Av18)</name>
    <dbReference type="NCBI Taxonomy" id="572546"/>
    <lineage>
        <taxon>Archaea</taxon>
        <taxon>Methanobacteriati</taxon>
        <taxon>Methanobacteriota</taxon>
        <taxon>Archaeoglobi</taxon>
        <taxon>Archaeoglobales</taxon>
        <taxon>Archaeoglobaceae</taxon>
        <taxon>Archaeoglobus</taxon>
    </lineage>
</organism>
<feature type="chain" id="PRO_0000204359" description="F420-non-reducing hydrogenase iron-sulfur subunit G">
    <location>
        <begin position="1"/>
        <end position="321"/>
    </location>
</feature>
<protein>
    <recommendedName>
        <fullName>F420-non-reducing hydrogenase iron-sulfur subunit G</fullName>
        <ecNumber>1.12.99.-</ecNumber>
    </recommendedName>
</protein>
<evidence type="ECO:0000255" key="1"/>
<evidence type="ECO:0000269" key="2">
    <source>
    </source>
</evidence>
<evidence type="ECO:0000305" key="3"/>